<keyword id="KW-0963">Cytoplasm</keyword>
<keyword id="KW-0342">GTP-binding</keyword>
<keyword id="KW-0436">Ligase</keyword>
<keyword id="KW-0460">Magnesium</keyword>
<keyword id="KW-0479">Metal-binding</keyword>
<keyword id="KW-0547">Nucleotide-binding</keyword>
<keyword id="KW-0658">Purine biosynthesis</keyword>
<keyword id="KW-1185">Reference proteome</keyword>
<dbReference type="EC" id="6.3.4.4" evidence="1"/>
<dbReference type="EMBL" id="CT573213">
    <property type="protein sequence ID" value="CAJ65283.1"/>
    <property type="molecule type" value="Genomic_DNA"/>
</dbReference>
<dbReference type="RefSeq" id="WP_011607698.1">
    <property type="nucleotide sequence ID" value="NC_008278.1"/>
</dbReference>
<dbReference type="SMR" id="Q0RBA3"/>
<dbReference type="STRING" id="326424.FRAAL6660"/>
<dbReference type="KEGG" id="fal:FRAAL6660"/>
<dbReference type="eggNOG" id="COG0104">
    <property type="taxonomic scope" value="Bacteria"/>
</dbReference>
<dbReference type="HOGENOM" id="CLU_029848_0_0_11"/>
<dbReference type="OrthoDB" id="9807553at2"/>
<dbReference type="UniPathway" id="UPA00075">
    <property type="reaction ID" value="UER00335"/>
</dbReference>
<dbReference type="Proteomes" id="UP000000657">
    <property type="component" value="Chromosome"/>
</dbReference>
<dbReference type="GO" id="GO:0005737">
    <property type="term" value="C:cytoplasm"/>
    <property type="evidence" value="ECO:0007669"/>
    <property type="project" value="UniProtKB-SubCell"/>
</dbReference>
<dbReference type="GO" id="GO:0004019">
    <property type="term" value="F:adenylosuccinate synthase activity"/>
    <property type="evidence" value="ECO:0007669"/>
    <property type="project" value="UniProtKB-UniRule"/>
</dbReference>
<dbReference type="GO" id="GO:0005525">
    <property type="term" value="F:GTP binding"/>
    <property type="evidence" value="ECO:0007669"/>
    <property type="project" value="UniProtKB-UniRule"/>
</dbReference>
<dbReference type="GO" id="GO:0000287">
    <property type="term" value="F:magnesium ion binding"/>
    <property type="evidence" value="ECO:0007669"/>
    <property type="project" value="UniProtKB-UniRule"/>
</dbReference>
<dbReference type="GO" id="GO:0044208">
    <property type="term" value="P:'de novo' AMP biosynthetic process"/>
    <property type="evidence" value="ECO:0007669"/>
    <property type="project" value="UniProtKB-UniRule"/>
</dbReference>
<dbReference type="GO" id="GO:0046040">
    <property type="term" value="P:IMP metabolic process"/>
    <property type="evidence" value="ECO:0007669"/>
    <property type="project" value="TreeGrafter"/>
</dbReference>
<dbReference type="CDD" id="cd03108">
    <property type="entry name" value="AdSS"/>
    <property type="match status" value="1"/>
</dbReference>
<dbReference type="FunFam" id="1.10.300.10:FF:000001">
    <property type="entry name" value="Adenylosuccinate synthetase"/>
    <property type="match status" value="1"/>
</dbReference>
<dbReference type="FunFam" id="3.90.170.10:FF:000001">
    <property type="entry name" value="Adenylosuccinate synthetase"/>
    <property type="match status" value="1"/>
</dbReference>
<dbReference type="Gene3D" id="3.40.440.10">
    <property type="entry name" value="Adenylosuccinate Synthetase, subunit A, domain 1"/>
    <property type="match status" value="1"/>
</dbReference>
<dbReference type="Gene3D" id="1.10.300.10">
    <property type="entry name" value="Adenylosuccinate Synthetase, subunit A, domain 2"/>
    <property type="match status" value="1"/>
</dbReference>
<dbReference type="Gene3D" id="3.90.170.10">
    <property type="entry name" value="Adenylosuccinate Synthetase, subunit A, domain 3"/>
    <property type="match status" value="1"/>
</dbReference>
<dbReference type="HAMAP" id="MF_00011">
    <property type="entry name" value="Adenylosucc_synth"/>
    <property type="match status" value="1"/>
</dbReference>
<dbReference type="InterPro" id="IPR018220">
    <property type="entry name" value="Adenylosuccin_syn_GTP-bd"/>
</dbReference>
<dbReference type="InterPro" id="IPR033128">
    <property type="entry name" value="Adenylosuccin_syn_Lys_AS"/>
</dbReference>
<dbReference type="InterPro" id="IPR042109">
    <property type="entry name" value="Adenylosuccinate_synth_dom1"/>
</dbReference>
<dbReference type="InterPro" id="IPR042110">
    <property type="entry name" value="Adenylosuccinate_synth_dom2"/>
</dbReference>
<dbReference type="InterPro" id="IPR042111">
    <property type="entry name" value="Adenylosuccinate_synth_dom3"/>
</dbReference>
<dbReference type="InterPro" id="IPR001114">
    <property type="entry name" value="Adenylosuccinate_synthetase"/>
</dbReference>
<dbReference type="InterPro" id="IPR027417">
    <property type="entry name" value="P-loop_NTPase"/>
</dbReference>
<dbReference type="NCBIfam" id="NF002223">
    <property type="entry name" value="PRK01117.1"/>
    <property type="match status" value="1"/>
</dbReference>
<dbReference type="NCBIfam" id="TIGR00184">
    <property type="entry name" value="purA"/>
    <property type="match status" value="1"/>
</dbReference>
<dbReference type="PANTHER" id="PTHR11846">
    <property type="entry name" value="ADENYLOSUCCINATE SYNTHETASE"/>
    <property type="match status" value="1"/>
</dbReference>
<dbReference type="PANTHER" id="PTHR11846:SF0">
    <property type="entry name" value="ADENYLOSUCCINATE SYNTHETASE"/>
    <property type="match status" value="1"/>
</dbReference>
<dbReference type="Pfam" id="PF00709">
    <property type="entry name" value="Adenylsucc_synt"/>
    <property type="match status" value="1"/>
</dbReference>
<dbReference type="SMART" id="SM00788">
    <property type="entry name" value="Adenylsucc_synt"/>
    <property type="match status" value="1"/>
</dbReference>
<dbReference type="SUPFAM" id="SSF52540">
    <property type="entry name" value="P-loop containing nucleoside triphosphate hydrolases"/>
    <property type="match status" value="1"/>
</dbReference>
<dbReference type="PROSITE" id="PS01266">
    <property type="entry name" value="ADENYLOSUCCIN_SYN_1"/>
    <property type="match status" value="1"/>
</dbReference>
<dbReference type="PROSITE" id="PS00513">
    <property type="entry name" value="ADENYLOSUCCIN_SYN_2"/>
    <property type="match status" value="1"/>
</dbReference>
<feature type="chain" id="PRO_1000000820" description="Adenylosuccinate synthetase">
    <location>
        <begin position="1"/>
        <end position="427"/>
    </location>
</feature>
<feature type="active site" description="Proton acceptor" evidence="1">
    <location>
        <position position="13"/>
    </location>
</feature>
<feature type="active site" description="Proton donor" evidence="1">
    <location>
        <position position="41"/>
    </location>
</feature>
<feature type="binding site" evidence="1">
    <location>
        <begin position="12"/>
        <end position="18"/>
    </location>
    <ligand>
        <name>GTP</name>
        <dbReference type="ChEBI" id="CHEBI:37565"/>
    </ligand>
</feature>
<feature type="binding site" description="in other chain" evidence="1">
    <location>
        <begin position="13"/>
        <end position="16"/>
    </location>
    <ligand>
        <name>IMP</name>
        <dbReference type="ChEBI" id="CHEBI:58053"/>
        <note>ligand shared between dimeric partners</note>
    </ligand>
</feature>
<feature type="binding site" evidence="1">
    <location>
        <position position="13"/>
    </location>
    <ligand>
        <name>Mg(2+)</name>
        <dbReference type="ChEBI" id="CHEBI:18420"/>
    </ligand>
</feature>
<feature type="binding site" description="in other chain" evidence="1">
    <location>
        <begin position="38"/>
        <end position="41"/>
    </location>
    <ligand>
        <name>IMP</name>
        <dbReference type="ChEBI" id="CHEBI:58053"/>
        <note>ligand shared between dimeric partners</note>
    </ligand>
</feature>
<feature type="binding site" evidence="1">
    <location>
        <begin position="40"/>
        <end position="42"/>
    </location>
    <ligand>
        <name>GTP</name>
        <dbReference type="ChEBI" id="CHEBI:37565"/>
    </ligand>
</feature>
<feature type="binding site" evidence="1">
    <location>
        <position position="40"/>
    </location>
    <ligand>
        <name>Mg(2+)</name>
        <dbReference type="ChEBI" id="CHEBI:18420"/>
    </ligand>
</feature>
<feature type="binding site" description="in other chain" evidence="1">
    <location>
        <position position="128"/>
    </location>
    <ligand>
        <name>IMP</name>
        <dbReference type="ChEBI" id="CHEBI:58053"/>
        <note>ligand shared between dimeric partners</note>
    </ligand>
</feature>
<feature type="binding site" evidence="1">
    <location>
        <position position="142"/>
    </location>
    <ligand>
        <name>IMP</name>
        <dbReference type="ChEBI" id="CHEBI:58053"/>
        <note>ligand shared between dimeric partners</note>
    </ligand>
</feature>
<feature type="binding site" description="in other chain" evidence="1">
    <location>
        <position position="223"/>
    </location>
    <ligand>
        <name>IMP</name>
        <dbReference type="ChEBI" id="CHEBI:58053"/>
        <note>ligand shared between dimeric partners</note>
    </ligand>
</feature>
<feature type="binding site" description="in other chain" evidence="1">
    <location>
        <position position="238"/>
    </location>
    <ligand>
        <name>IMP</name>
        <dbReference type="ChEBI" id="CHEBI:58053"/>
        <note>ligand shared between dimeric partners</note>
    </ligand>
</feature>
<feature type="binding site" evidence="1">
    <location>
        <begin position="298"/>
        <end position="304"/>
    </location>
    <ligand>
        <name>substrate</name>
    </ligand>
</feature>
<feature type="binding site" description="in other chain" evidence="1">
    <location>
        <position position="302"/>
    </location>
    <ligand>
        <name>IMP</name>
        <dbReference type="ChEBI" id="CHEBI:58053"/>
        <note>ligand shared between dimeric partners</note>
    </ligand>
</feature>
<feature type="binding site" evidence="1">
    <location>
        <position position="304"/>
    </location>
    <ligand>
        <name>GTP</name>
        <dbReference type="ChEBI" id="CHEBI:37565"/>
    </ligand>
</feature>
<feature type="binding site" evidence="1">
    <location>
        <begin position="330"/>
        <end position="332"/>
    </location>
    <ligand>
        <name>GTP</name>
        <dbReference type="ChEBI" id="CHEBI:37565"/>
    </ligand>
</feature>
<feature type="binding site" evidence="1">
    <location>
        <begin position="412"/>
        <end position="414"/>
    </location>
    <ligand>
        <name>GTP</name>
        <dbReference type="ChEBI" id="CHEBI:37565"/>
    </ligand>
</feature>
<gene>
    <name evidence="1" type="primary">purA</name>
    <name type="ordered locus">FRAAL6660</name>
</gene>
<reference key="1">
    <citation type="journal article" date="2007" name="Genome Res.">
        <title>Genome characteristics of facultatively symbiotic Frankia sp. strains reflect host range and host plant biogeography.</title>
        <authorList>
            <person name="Normand P."/>
            <person name="Lapierre P."/>
            <person name="Tisa L.S."/>
            <person name="Gogarten J.P."/>
            <person name="Alloisio N."/>
            <person name="Bagnarol E."/>
            <person name="Bassi C.A."/>
            <person name="Berry A.M."/>
            <person name="Bickhart D.M."/>
            <person name="Choisne N."/>
            <person name="Couloux A."/>
            <person name="Cournoyer B."/>
            <person name="Cruveiller S."/>
            <person name="Daubin V."/>
            <person name="Demange N."/>
            <person name="Francino M.P."/>
            <person name="Goltsman E."/>
            <person name="Huang Y."/>
            <person name="Kopp O.R."/>
            <person name="Labarre L."/>
            <person name="Lapidus A."/>
            <person name="Lavire C."/>
            <person name="Marechal J."/>
            <person name="Martinez M."/>
            <person name="Mastronunzio J.E."/>
            <person name="Mullin B.C."/>
            <person name="Niemann J."/>
            <person name="Pujic P."/>
            <person name="Rawnsley T."/>
            <person name="Rouy Z."/>
            <person name="Schenowitz C."/>
            <person name="Sellstedt A."/>
            <person name="Tavares F."/>
            <person name="Tomkins J.P."/>
            <person name="Vallenet D."/>
            <person name="Valverde C."/>
            <person name="Wall L.G."/>
            <person name="Wang Y."/>
            <person name="Medigue C."/>
            <person name="Benson D.R."/>
        </authorList>
    </citation>
    <scope>NUCLEOTIDE SEQUENCE [LARGE SCALE GENOMIC DNA]</scope>
    <source>
        <strain>DSM 45986 / CECT 9034 / ACN14a</strain>
    </source>
</reference>
<proteinExistence type="inferred from homology"/>
<protein>
    <recommendedName>
        <fullName evidence="1">Adenylosuccinate synthetase</fullName>
        <shortName evidence="1">AMPSase</shortName>
        <shortName evidence="1">AdSS</shortName>
        <ecNumber evidence="1">6.3.4.4</ecNumber>
    </recommendedName>
    <alternativeName>
        <fullName evidence="1">IMP--aspartate ligase</fullName>
    </alternativeName>
</protein>
<organism>
    <name type="scientific">Frankia alni (strain DSM 45986 / CECT 9034 / ACN14a)</name>
    <dbReference type="NCBI Taxonomy" id="326424"/>
    <lineage>
        <taxon>Bacteria</taxon>
        <taxon>Bacillati</taxon>
        <taxon>Actinomycetota</taxon>
        <taxon>Actinomycetes</taxon>
        <taxon>Frankiales</taxon>
        <taxon>Frankiaceae</taxon>
        <taxon>Frankia</taxon>
    </lineage>
</organism>
<evidence type="ECO:0000255" key="1">
    <source>
        <dbReference type="HAMAP-Rule" id="MF_00011"/>
    </source>
</evidence>
<sequence>MPALVLIGAQWGDEGKGKATDLLGGAVDYVVRYQGGNNAGHTVVIGEERYALHLIPSGILRADCVPVIGNGVVIDPGVLLTEMDGLAARGIDVSRLLISANAHLIMPHHRALDRVTERYLGKARIGTTGRGIGPTYGDKVARTGIRVQDLLDPGIFRKKLELALREKNQVLAKVYNRRRIEVDEVVEEYAAYAERLGPHIADTGLVLDRALREGKVVLLEGSQGTLLDVDHGSYPFVTSSNPTAGYAATGAGIGPTRINRVVGIIKAYTTRVGAGPFPTELDDKVGEELRRIGGEFGVTTGRARRTGWFDAVIARYAVRVNGLTDLFLTKLDVLSGFDRVPICVGYDIGGERVDEMPMTQTEFHHARPIYTELPGWQEDLSDVRKYADLPAAAKDYIRTLEELSGAPVSAIGVGPGRDQTLVINDLV</sequence>
<name>PURA_FRAAA</name>
<comment type="function">
    <text evidence="1">Plays an important role in the de novo pathway of purine nucleotide biosynthesis. Catalyzes the first committed step in the biosynthesis of AMP from IMP.</text>
</comment>
<comment type="catalytic activity">
    <reaction evidence="1">
        <text>IMP + L-aspartate + GTP = N(6)-(1,2-dicarboxyethyl)-AMP + GDP + phosphate + 2 H(+)</text>
        <dbReference type="Rhea" id="RHEA:15753"/>
        <dbReference type="ChEBI" id="CHEBI:15378"/>
        <dbReference type="ChEBI" id="CHEBI:29991"/>
        <dbReference type="ChEBI" id="CHEBI:37565"/>
        <dbReference type="ChEBI" id="CHEBI:43474"/>
        <dbReference type="ChEBI" id="CHEBI:57567"/>
        <dbReference type="ChEBI" id="CHEBI:58053"/>
        <dbReference type="ChEBI" id="CHEBI:58189"/>
        <dbReference type="EC" id="6.3.4.4"/>
    </reaction>
</comment>
<comment type="cofactor">
    <cofactor evidence="1">
        <name>Mg(2+)</name>
        <dbReference type="ChEBI" id="CHEBI:18420"/>
    </cofactor>
    <text evidence="1">Binds 1 Mg(2+) ion per subunit.</text>
</comment>
<comment type="pathway">
    <text evidence="1">Purine metabolism; AMP biosynthesis via de novo pathway; AMP from IMP: step 1/2.</text>
</comment>
<comment type="subunit">
    <text evidence="1">Homodimer.</text>
</comment>
<comment type="subcellular location">
    <subcellularLocation>
        <location evidence="1">Cytoplasm</location>
    </subcellularLocation>
</comment>
<comment type="similarity">
    <text evidence="1">Belongs to the adenylosuccinate synthetase family.</text>
</comment>
<accession>Q0RBA3</accession>